<dbReference type="EMBL" id="CP017630">
    <property type="protein sequence ID" value="AOW31151.1"/>
    <property type="molecule type" value="Genomic_DNA"/>
</dbReference>
<dbReference type="RefSeq" id="XP_717360.1">
    <property type="nucleotide sequence ID" value="XM_712267.2"/>
</dbReference>
<dbReference type="BioGRID" id="1224002">
    <property type="interactions" value="1"/>
</dbReference>
<dbReference type="FunCoup" id="Q5A6Q7">
    <property type="interactions" value="70"/>
</dbReference>
<dbReference type="STRING" id="237561.Q5A6Q7"/>
<dbReference type="EnsemblFungi" id="CR_04130C_A-T">
    <property type="protein sequence ID" value="CR_04130C_A-T-p1"/>
    <property type="gene ID" value="CR_04130C_A"/>
</dbReference>
<dbReference type="GeneID" id="3640973"/>
<dbReference type="KEGG" id="cal:CAALFM_CR04130CA"/>
<dbReference type="CGD" id="CAL0000190105">
    <property type="gene designation" value="EAF7"/>
</dbReference>
<dbReference type="VEuPathDB" id="FungiDB:CR_04130C_A"/>
<dbReference type="eggNOG" id="KOG4051">
    <property type="taxonomic scope" value="Eukaryota"/>
</dbReference>
<dbReference type="HOGENOM" id="CLU_615372_0_0_1"/>
<dbReference type="InParanoid" id="Q5A6Q7"/>
<dbReference type="OMA" id="PKITHNE"/>
<dbReference type="OrthoDB" id="5595141at2759"/>
<dbReference type="PRO" id="PR:Q5A6Q7"/>
<dbReference type="Proteomes" id="UP000000559">
    <property type="component" value="Chromosome R"/>
</dbReference>
<dbReference type="GO" id="GO:0035267">
    <property type="term" value="C:NuA4 histone acetyltransferase complex"/>
    <property type="evidence" value="ECO:0000314"/>
    <property type="project" value="CGD"/>
</dbReference>
<dbReference type="GO" id="GO:0005634">
    <property type="term" value="C:nucleus"/>
    <property type="evidence" value="ECO:0007669"/>
    <property type="project" value="UniProtKB-SubCell"/>
</dbReference>
<dbReference type="GO" id="GO:0006338">
    <property type="term" value="P:chromatin remodeling"/>
    <property type="evidence" value="ECO:0007669"/>
    <property type="project" value="GOC"/>
</dbReference>
<dbReference type="GO" id="GO:0006281">
    <property type="term" value="P:DNA repair"/>
    <property type="evidence" value="ECO:0007669"/>
    <property type="project" value="UniProtKB-KW"/>
</dbReference>
<dbReference type="GO" id="GO:0006357">
    <property type="term" value="P:regulation of transcription by RNA polymerase II"/>
    <property type="evidence" value="ECO:0000318"/>
    <property type="project" value="GO_Central"/>
</dbReference>
<dbReference type="InterPro" id="IPR012423">
    <property type="entry name" value="Eaf7/MRGBP"/>
</dbReference>
<dbReference type="PANTHER" id="PTHR13581">
    <property type="entry name" value="MRG-BINDING PROTEIN"/>
    <property type="match status" value="1"/>
</dbReference>
<dbReference type="PANTHER" id="PTHR13581:SF5">
    <property type="entry name" value="MRG_MORF4L-BINDING PROTEIN"/>
    <property type="match status" value="1"/>
</dbReference>
<dbReference type="Pfam" id="PF07904">
    <property type="entry name" value="Eaf7"/>
    <property type="match status" value="1"/>
</dbReference>
<reference key="1">
    <citation type="journal article" date="2004" name="Proc. Natl. Acad. Sci. U.S.A.">
        <title>The diploid genome sequence of Candida albicans.</title>
        <authorList>
            <person name="Jones T."/>
            <person name="Federspiel N.A."/>
            <person name="Chibana H."/>
            <person name="Dungan J."/>
            <person name="Kalman S."/>
            <person name="Magee B.B."/>
            <person name="Newport G."/>
            <person name="Thorstenson Y.R."/>
            <person name="Agabian N."/>
            <person name="Magee P.T."/>
            <person name="Davis R.W."/>
            <person name="Scherer S."/>
        </authorList>
    </citation>
    <scope>NUCLEOTIDE SEQUENCE [LARGE SCALE GENOMIC DNA]</scope>
    <source>
        <strain>SC5314 / ATCC MYA-2876</strain>
    </source>
</reference>
<reference key="2">
    <citation type="journal article" date="2007" name="Genome Biol.">
        <title>Assembly of the Candida albicans genome into sixteen supercontigs aligned on the eight chromosomes.</title>
        <authorList>
            <person name="van het Hoog M."/>
            <person name="Rast T.J."/>
            <person name="Martchenko M."/>
            <person name="Grindle S."/>
            <person name="Dignard D."/>
            <person name="Hogues H."/>
            <person name="Cuomo C."/>
            <person name="Berriman M."/>
            <person name="Scherer S."/>
            <person name="Magee B.B."/>
            <person name="Whiteway M."/>
            <person name="Chibana H."/>
            <person name="Nantel A."/>
            <person name="Magee P.T."/>
        </authorList>
    </citation>
    <scope>GENOME REANNOTATION</scope>
    <source>
        <strain>SC5314 / ATCC MYA-2876</strain>
    </source>
</reference>
<reference key="3">
    <citation type="journal article" date="2013" name="Genome Biol.">
        <title>Assembly of a phased diploid Candida albicans genome facilitates allele-specific measurements and provides a simple model for repeat and indel structure.</title>
        <authorList>
            <person name="Muzzey D."/>
            <person name="Schwartz K."/>
            <person name="Weissman J.S."/>
            <person name="Sherlock G."/>
        </authorList>
    </citation>
    <scope>NUCLEOTIDE SEQUENCE [LARGE SCALE GENOMIC DNA]</scope>
    <scope>GENOME REANNOTATION</scope>
    <source>
        <strain>SC5314 / ATCC MYA-2876</strain>
    </source>
</reference>
<gene>
    <name type="primary">EAF7</name>
    <name type="ordered locus">CAALFM_CR04130CA</name>
    <name type="ORF">CaO19.497</name>
    <name type="ORF">CaO19.8127</name>
</gene>
<proteinExistence type="inferred from homology"/>
<evidence type="ECO:0000250" key="1"/>
<evidence type="ECO:0000256" key="2">
    <source>
        <dbReference type="SAM" id="MobiDB-lite"/>
    </source>
</evidence>
<evidence type="ECO:0000305" key="3"/>
<protein>
    <recommendedName>
        <fullName>Chromatin modification-related protein EAF7</fullName>
    </recommendedName>
</protein>
<name>EAF7_CANAL</name>
<feature type="chain" id="PRO_0000215878" description="Chromatin modification-related protein EAF7">
    <location>
        <begin position="1"/>
        <end position="445"/>
    </location>
</feature>
<feature type="region of interest" description="Disordered" evidence="2">
    <location>
        <begin position="85"/>
        <end position="445"/>
    </location>
</feature>
<feature type="compositionally biased region" description="Low complexity" evidence="2">
    <location>
        <begin position="87"/>
        <end position="97"/>
    </location>
</feature>
<feature type="compositionally biased region" description="Polar residues" evidence="2">
    <location>
        <begin position="98"/>
        <end position="107"/>
    </location>
</feature>
<feature type="compositionally biased region" description="Basic and acidic residues" evidence="2">
    <location>
        <begin position="108"/>
        <end position="135"/>
    </location>
</feature>
<feature type="compositionally biased region" description="Basic and acidic residues" evidence="2">
    <location>
        <begin position="151"/>
        <end position="172"/>
    </location>
</feature>
<feature type="compositionally biased region" description="Polar residues" evidence="2">
    <location>
        <begin position="188"/>
        <end position="205"/>
    </location>
</feature>
<feature type="compositionally biased region" description="Acidic residues" evidence="2">
    <location>
        <begin position="213"/>
        <end position="224"/>
    </location>
</feature>
<feature type="compositionally biased region" description="Basic and acidic residues" evidence="2">
    <location>
        <begin position="225"/>
        <end position="254"/>
    </location>
</feature>
<feature type="compositionally biased region" description="Acidic residues" evidence="2">
    <location>
        <begin position="255"/>
        <end position="264"/>
    </location>
</feature>
<feature type="compositionally biased region" description="Basic and acidic residues" evidence="2">
    <location>
        <begin position="265"/>
        <end position="279"/>
    </location>
</feature>
<feature type="compositionally biased region" description="Acidic residues" evidence="2">
    <location>
        <begin position="280"/>
        <end position="299"/>
    </location>
</feature>
<feature type="compositionally biased region" description="Basic and acidic residues" evidence="2">
    <location>
        <begin position="300"/>
        <end position="309"/>
    </location>
</feature>
<feature type="compositionally biased region" description="Acidic residues" evidence="2">
    <location>
        <begin position="393"/>
        <end position="408"/>
    </location>
</feature>
<organism>
    <name type="scientific">Candida albicans (strain SC5314 / ATCC MYA-2876)</name>
    <name type="common">Yeast</name>
    <dbReference type="NCBI Taxonomy" id="237561"/>
    <lineage>
        <taxon>Eukaryota</taxon>
        <taxon>Fungi</taxon>
        <taxon>Dikarya</taxon>
        <taxon>Ascomycota</taxon>
        <taxon>Saccharomycotina</taxon>
        <taxon>Pichiomycetes</taxon>
        <taxon>Debaryomycetaceae</taxon>
        <taxon>Candida/Lodderomyces clade</taxon>
        <taxon>Candida</taxon>
    </lineage>
</organism>
<sequence length="445" mass="50718">MATLDENNPSKQTHRHWSIENEIKLFSLLCDYKPAGKNKQHNIKIIINNINESLDSKEEPFSEYDVWNKLRSLYDLEKIDQIEELSTENTSTEETTNQVSSGSANITKDTKNAKTTLDAKEPIQDKKEMDKEKSESSSLSTPEPPQRRTRSARDTTKSKRNLRDTPKEKSQYNDEEITSGGAEKSKVEVSSTSDHTDDQSPTPGSTKKGLDEQTNDDMSDIEDVDKDKGDETIAKIKKENTSEQEEDKNKKQTEEEAEEEEEEGDHVSGDERESKNKDTSEDEDGEDNEDQDEDDVEVIEDSHTDKENESSSEESSPEPMTKRTRQRTRSTHEKTEHTSPNIKKRTRQSVKFDDKPAEPSDTGSRKRRAPPGSVSPPHPPKTRRRTRSVTHEIEEEDASTQSADDAEPEIIKVETRHTTRRSSRISMEPSSSTPNVRVRRSSRKR</sequence>
<comment type="function">
    <text evidence="1">Component of the NuA4 histone acetyltransferase complex which is involved in transcriptional activation of selected genes principally by acetylation of nucleosomal histone H4 and H2A. The NuA4 complex is also involved in DNA repair (By similarity).</text>
</comment>
<comment type="subunit">
    <text evidence="1">Component of the NuA4 histone acetyltransferase complex.</text>
</comment>
<comment type="subcellular location">
    <subcellularLocation>
        <location evidence="1">Nucleus</location>
    </subcellularLocation>
</comment>
<comment type="similarity">
    <text evidence="3">Belongs to the EAF7 family.</text>
</comment>
<accession>Q5A6Q7</accession>
<accession>A0A1D8PSN4</accession>
<keyword id="KW-0156">Chromatin regulator</keyword>
<keyword id="KW-0227">DNA damage</keyword>
<keyword id="KW-0234">DNA repair</keyword>
<keyword id="KW-0539">Nucleus</keyword>
<keyword id="KW-1185">Reference proteome</keyword>
<keyword id="KW-0804">Transcription</keyword>
<keyword id="KW-0805">Transcription regulation</keyword>